<reference key="1">
    <citation type="submission" date="2003-03" db="EMBL/GenBank/DDBJ databases">
        <title>African swine fever virus genomes.</title>
        <authorList>
            <person name="Kutish G.F."/>
            <person name="Rock D.L."/>
        </authorList>
    </citation>
    <scope>NUCLEOTIDE SEQUENCE [LARGE SCALE GENOMIC DNA]</scope>
</reference>
<evidence type="ECO:0000250" key="1"/>
<evidence type="ECO:0000305" key="2"/>
<gene>
    <name type="ordered locus">Pret-174</name>
</gene>
<dbReference type="EMBL" id="AY261363">
    <property type="status" value="NOT_ANNOTATED_CDS"/>
    <property type="molecule type" value="Genomic_DNA"/>
</dbReference>
<dbReference type="SMR" id="P0C9S0"/>
<dbReference type="Proteomes" id="UP000000859">
    <property type="component" value="Segment"/>
</dbReference>
<dbReference type="GO" id="GO:0042330">
    <property type="term" value="P:taxis"/>
    <property type="evidence" value="ECO:0007669"/>
    <property type="project" value="InterPro"/>
</dbReference>
<dbReference type="InterPro" id="IPR002595">
    <property type="entry name" value="ASFV_MGF360"/>
</dbReference>
<dbReference type="Pfam" id="PF01671">
    <property type="entry name" value="ASFV_360"/>
    <property type="match status" value="1"/>
</dbReference>
<protein>
    <recommendedName>
        <fullName>Protein MGF 360-19R</fullName>
    </recommendedName>
</protein>
<comment type="function">
    <text evidence="1">Plays a role in virus cell tropism, and may be required for efficient virus replication in macrophages.</text>
</comment>
<comment type="similarity">
    <text evidence="2">Belongs to the asfivirus MGF 360 family.</text>
</comment>
<organismHost>
    <name type="scientific">Ornithodoros</name>
    <name type="common">relapsing fever ticks</name>
    <dbReference type="NCBI Taxonomy" id="6937"/>
</organismHost>
<organismHost>
    <name type="scientific">Phacochoerus aethiopicus</name>
    <name type="common">Warthog</name>
    <dbReference type="NCBI Taxonomy" id="85517"/>
</organismHost>
<organismHost>
    <name type="scientific">Phacochoerus africanus</name>
    <name type="common">Warthog</name>
    <dbReference type="NCBI Taxonomy" id="41426"/>
</organismHost>
<organismHost>
    <name type="scientific">Potamochoerus larvatus</name>
    <name type="common">Bushpig</name>
    <dbReference type="NCBI Taxonomy" id="273792"/>
</organismHost>
<organismHost>
    <name type="scientific">Sus scrofa</name>
    <name type="common">Pig</name>
    <dbReference type="NCBI Taxonomy" id="9823"/>
</organismHost>
<organism>
    <name type="scientific">African swine fever virus (isolate Tick/South Africa/Pretoriuskop Pr4/1996)</name>
    <name type="common">ASFV</name>
    <dbReference type="NCBI Taxonomy" id="561443"/>
    <lineage>
        <taxon>Viruses</taxon>
        <taxon>Varidnaviria</taxon>
        <taxon>Bamfordvirae</taxon>
        <taxon>Nucleocytoviricota</taxon>
        <taxon>Pokkesviricetes</taxon>
        <taxon>Asfuvirales</taxon>
        <taxon>Asfarviridae</taxon>
        <taxon>Asfivirus</taxon>
        <taxon>African swine fever virus</taxon>
    </lineage>
</organism>
<accession>P0C9S0</accession>
<sequence>MPSTLQVLAKKVLALEHKENDHISREYYYHILKCCGLWWHEAPIILCFNGSKQMMIKTPIFEEGILLNTALMKAVQDNNYELIKLFTEWGANINYGLISINTEYTRDLCRKLGAKERLERHEVIQIMFKILDDTTSSNMILCHELFTNNPLLENVNMGQMRMIIHWRMKNLTDLLLNNNSISEILTKFWYGIAVKYNLKDAIQYFYQRFINFNEWRVTCALSFNNVNDLHKMYITERVHMNNDEMMNLACSIQDKNFSTIYYCFLLGANINQAMFISVLNYNIFNIFFCIDLGADAFKEGKALAKQKGYNEIVEILSLDIIYSPNTDFSSKIKPEHISFLLKNFYPKNLYIFDRCKPGLYYP</sequence>
<proteinExistence type="inferred from homology"/>
<keyword id="KW-0040">ANK repeat</keyword>
<name>36019_ASFP4</name>
<feature type="chain" id="PRO_0000373308" description="Protein MGF 360-19R">
    <location>
        <begin position="1"/>
        <end position="362"/>
    </location>
</feature>
<feature type="repeat" description="ANK">
    <location>
        <begin position="66"/>
        <end position="98"/>
    </location>
</feature>